<proteinExistence type="inferred from homology"/>
<keyword id="KW-0963">Cytoplasm</keyword>
<keyword id="KW-0489">Methyltransferase</keyword>
<keyword id="KW-1185">Reference proteome</keyword>
<keyword id="KW-0698">rRNA processing</keyword>
<keyword id="KW-0949">S-adenosyl-L-methionine</keyword>
<keyword id="KW-0808">Transferase</keyword>
<dbReference type="EC" id="2.1.1.198" evidence="1"/>
<dbReference type="EMBL" id="FM864216">
    <property type="protein sequence ID" value="CAT05067.1"/>
    <property type="molecule type" value="Genomic_DNA"/>
</dbReference>
<dbReference type="SMR" id="C5J6H5"/>
<dbReference type="KEGG" id="mco:MCJ_003790"/>
<dbReference type="eggNOG" id="COG0313">
    <property type="taxonomic scope" value="Bacteria"/>
</dbReference>
<dbReference type="HOGENOM" id="CLU_044779_4_0_14"/>
<dbReference type="Proteomes" id="UP000001491">
    <property type="component" value="Chromosome"/>
</dbReference>
<dbReference type="GO" id="GO:0005737">
    <property type="term" value="C:cytoplasm"/>
    <property type="evidence" value="ECO:0007669"/>
    <property type="project" value="UniProtKB-SubCell"/>
</dbReference>
<dbReference type="GO" id="GO:0070677">
    <property type="term" value="F:rRNA (cytosine-2'-O-)-methyltransferase activity"/>
    <property type="evidence" value="ECO:0007669"/>
    <property type="project" value="UniProtKB-UniRule"/>
</dbReference>
<dbReference type="CDD" id="cd11648">
    <property type="entry name" value="RsmI"/>
    <property type="match status" value="1"/>
</dbReference>
<dbReference type="FunFam" id="3.40.1010.10:FF:000007">
    <property type="entry name" value="Ribosomal RNA small subunit methyltransferase I"/>
    <property type="match status" value="1"/>
</dbReference>
<dbReference type="Gene3D" id="3.40.1010.10">
    <property type="entry name" value="Cobalt-precorrin-4 Transmethylase, Domain 1"/>
    <property type="match status" value="1"/>
</dbReference>
<dbReference type="Gene3D" id="3.30.950.10">
    <property type="entry name" value="Methyltransferase, Cobalt-precorrin-4 Transmethylase, Domain 2"/>
    <property type="match status" value="1"/>
</dbReference>
<dbReference type="HAMAP" id="MF_01877">
    <property type="entry name" value="16SrRNA_methyltr_I"/>
    <property type="match status" value="1"/>
</dbReference>
<dbReference type="InterPro" id="IPR000878">
    <property type="entry name" value="4pyrrol_Mease"/>
</dbReference>
<dbReference type="InterPro" id="IPR035996">
    <property type="entry name" value="4pyrrol_Methylase_sf"/>
</dbReference>
<dbReference type="InterPro" id="IPR014777">
    <property type="entry name" value="4pyrrole_Mease_sub1"/>
</dbReference>
<dbReference type="InterPro" id="IPR014776">
    <property type="entry name" value="4pyrrole_Mease_sub2"/>
</dbReference>
<dbReference type="InterPro" id="IPR008189">
    <property type="entry name" value="rRNA_ssu_MeTfrase_I"/>
</dbReference>
<dbReference type="InterPro" id="IPR018063">
    <property type="entry name" value="SAM_MeTrfase_RsmI_CS"/>
</dbReference>
<dbReference type="NCBIfam" id="TIGR00096">
    <property type="entry name" value="16S rRNA (cytidine(1402)-2'-O)-methyltransferase"/>
    <property type="match status" value="1"/>
</dbReference>
<dbReference type="PANTHER" id="PTHR46111">
    <property type="entry name" value="RIBOSOMAL RNA SMALL SUBUNIT METHYLTRANSFERASE I"/>
    <property type="match status" value="1"/>
</dbReference>
<dbReference type="PANTHER" id="PTHR46111:SF1">
    <property type="entry name" value="RIBOSOMAL RNA SMALL SUBUNIT METHYLTRANSFERASE I"/>
    <property type="match status" value="1"/>
</dbReference>
<dbReference type="Pfam" id="PF00590">
    <property type="entry name" value="TP_methylase"/>
    <property type="match status" value="1"/>
</dbReference>
<dbReference type="PIRSF" id="PIRSF005917">
    <property type="entry name" value="MTase_YraL"/>
    <property type="match status" value="1"/>
</dbReference>
<dbReference type="SUPFAM" id="SSF53790">
    <property type="entry name" value="Tetrapyrrole methylase"/>
    <property type="match status" value="1"/>
</dbReference>
<dbReference type="PROSITE" id="PS01296">
    <property type="entry name" value="RSMI"/>
    <property type="match status" value="1"/>
</dbReference>
<name>RSMI_MESCH</name>
<sequence length="238" mass="27341">MTKKITLVSTPIGNLKDISLRALDTLRDSDIILCEDTRVSQKLLNHYQINNKKLISYHKFNEYKMLDLIDNYLNQGLQICLISDAGVPTISDPGQILVNWAHENDIEVDIIPGANALISAFALSGYKGSFYFGGFLDSKKQQIIKQISLLDPKVSYIFYISPFKLVYTLEIIRDLYGEEIDIFLIKEITKIYQKYYRGTPDKILNNLSAPKGEFTIILKLKEKKSIKKNKYEQFSKVK</sequence>
<protein>
    <recommendedName>
        <fullName evidence="1">Ribosomal RNA small subunit methyltransferase I</fullName>
        <ecNumber evidence="1">2.1.1.198</ecNumber>
    </recommendedName>
    <alternativeName>
        <fullName evidence="1">16S rRNA 2'-O-ribose C1402 methyltransferase</fullName>
    </alternativeName>
    <alternativeName>
        <fullName evidence="1">rRNA (cytidine-2'-O-)-methyltransferase RsmI</fullName>
    </alternativeName>
</protein>
<accession>C5J6H5</accession>
<evidence type="ECO:0000255" key="1">
    <source>
        <dbReference type="HAMAP-Rule" id="MF_01877"/>
    </source>
</evidence>
<organism>
    <name type="scientific">Mesomycoplasma conjunctivae (strain ATCC 25834 / NCTC 10147 / HRC/581)</name>
    <name type="common">Mycoplasma conjunctivae</name>
    <dbReference type="NCBI Taxonomy" id="572263"/>
    <lineage>
        <taxon>Bacteria</taxon>
        <taxon>Bacillati</taxon>
        <taxon>Mycoplasmatota</taxon>
        <taxon>Mycoplasmoidales</taxon>
        <taxon>Metamycoplasmataceae</taxon>
        <taxon>Mesomycoplasma</taxon>
    </lineage>
</organism>
<feature type="chain" id="PRO_0000394490" description="Ribosomal RNA small subunit methyltransferase I">
    <location>
        <begin position="1"/>
        <end position="238"/>
    </location>
</feature>
<comment type="function">
    <text evidence="1">Catalyzes the 2'-O-methylation of the ribose of cytidine 1402 (C1402) in 16S rRNA.</text>
</comment>
<comment type="catalytic activity">
    <reaction evidence="1">
        <text>cytidine(1402) in 16S rRNA + S-adenosyl-L-methionine = 2'-O-methylcytidine(1402) in 16S rRNA + S-adenosyl-L-homocysteine + H(+)</text>
        <dbReference type="Rhea" id="RHEA:42924"/>
        <dbReference type="Rhea" id="RHEA-COMP:10285"/>
        <dbReference type="Rhea" id="RHEA-COMP:10286"/>
        <dbReference type="ChEBI" id="CHEBI:15378"/>
        <dbReference type="ChEBI" id="CHEBI:57856"/>
        <dbReference type="ChEBI" id="CHEBI:59789"/>
        <dbReference type="ChEBI" id="CHEBI:74495"/>
        <dbReference type="ChEBI" id="CHEBI:82748"/>
        <dbReference type="EC" id="2.1.1.198"/>
    </reaction>
</comment>
<comment type="subcellular location">
    <subcellularLocation>
        <location evidence="1">Cytoplasm</location>
    </subcellularLocation>
</comment>
<comment type="similarity">
    <text evidence="1">Belongs to the methyltransferase superfamily. RsmI family.</text>
</comment>
<gene>
    <name evidence="1" type="primary">rsmI</name>
    <name type="ordered locus">MCJ_003790</name>
</gene>
<reference key="1">
    <citation type="journal article" date="2009" name="BMC Bioinformatics">
        <title>The Mycoplasma conjunctivae genome sequencing, annotation and analysis.</title>
        <authorList>
            <person name="Calderon-Copete S.P."/>
            <person name="Wigger G."/>
            <person name="Wunderlin C."/>
            <person name="Schmidheini T."/>
            <person name="Frey J."/>
            <person name="Quail M.A."/>
            <person name="Falquet L."/>
        </authorList>
    </citation>
    <scope>NUCLEOTIDE SEQUENCE [LARGE SCALE GENOMIC DNA]</scope>
    <source>
        <strain>ATCC 25834 / NCTC 10147 / HRC/581</strain>
    </source>
</reference>